<feature type="chain" id="PRO_0000398653" description="Polyprenal reductase">
    <location>
        <begin position="1"/>
        <end position="309"/>
    </location>
</feature>
<feature type="transmembrane region" description="Helical" evidence="2">
    <location>
        <begin position="12"/>
        <end position="32"/>
    </location>
</feature>
<feature type="transmembrane region" description="Helical" evidence="2">
    <location>
        <begin position="72"/>
        <end position="92"/>
    </location>
</feature>
<feature type="transmembrane region" description="Helical" evidence="2">
    <location>
        <begin position="114"/>
        <end position="134"/>
    </location>
</feature>
<feature type="transmembrane region" description="Helical" evidence="2">
    <location>
        <begin position="151"/>
        <end position="171"/>
    </location>
</feature>
<feature type="transmembrane region" description="Helical" evidence="2">
    <location>
        <begin position="184"/>
        <end position="204"/>
    </location>
</feature>
<feature type="transmembrane region" description="Helical" evidence="2">
    <location>
        <begin position="242"/>
        <end position="262"/>
    </location>
</feature>
<feature type="transmembrane region" description="Helical" evidence="2">
    <location>
        <begin position="270"/>
        <end position="290"/>
    </location>
</feature>
<gene>
    <name evidence="4" type="primary">srdf-3</name>
    <name evidence="4" type="ORF">B0024.13</name>
</gene>
<evidence type="ECO:0000250" key="1">
    <source>
        <dbReference type="UniProtKB" id="Q9H8P0"/>
    </source>
</evidence>
<evidence type="ECO:0000255" key="2"/>
<evidence type="ECO:0000305" key="3"/>
<evidence type="ECO:0000312" key="4">
    <source>
        <dbReference type="WormBase" id="B0024.13"/>
    </source>
</evidence>
<name>SR5A3_CAEEL</name>
<protein>
    <recommendedName>
        <fullName evidence="3">Polyprenal reductase</fullName>
        <ecNumber evidence="1">1.3.1.94</ecNumber>
    </recommendedName>
</protein>
<comment type="function">
    <text evidence="1">Plays a key role in early steps of protein N-linked glycosylation by being involved in the conversion of polyprenol into dolichol. Acts as a polyprenal reductase that mediates the reduction of polyprenal into dolichal in a NADP-dependent mechanism. Dolichols are required for the synthesis of dolichol-linked monosaccharides and the oligosaccharide precursor used for N-glycosylation.</text>
</comment>
<comment type="catalytic activity">
    <reaction evidence="1">
        <text>a di-trans,poly-cis-dolichal + NADP(+) = a di-trans,poly-cis-polyprenal + NADPH + H(+)</text>
        <dbReference type="Rhea" id="RHEA:80727"/>
        <dbReference type="Rhea" id="RHEA-COMP:19536"/>
        <dbReference type="Rhea" id="RHEA-COMP:19537"/>
        <dbReference type="ChEBI" id="CHEBI:15378"/>
        <dbReference type="ChEBI" id="CHEBI:57783"/>
        <dbReference type="ChEBI" id="CHEBI:58349"/>
        <dbReference type="ChEBI" id="CHEBI:231623"/>
        <dbReference type="ChEBI" id="CHEBI:231637"/>
        <dbReference type="EC" id="1.3.1.94"/>
    </reaction>
    <physiologicalReaction direction="right-to-left" evidence="1">
        <dbReference type="Rhea" id="RHEA:80729"/>
    </physiologicalReaction>
</comment>
<comment type="pathway">
    <text evidence="1">Protein modification; protein glycosylation.</text>
</comment>
<comment type="subcellular location">
    <subcellularLocation>
        <location evidence="1">Endoplasmic reticulum membrane</location>
        <topology evidence="2">Multi-pass membrane protein</topology>
    </subcellularLocation>
</comment>
<comment type="similarity">
    <text evidence="3">Belongs to the steroid 5-alpha reductase family. Polyprenal reductase subfamily.</text>
</comment>
<keyword id="KW-0256">Endoplasmic reticulum</keyword>
<keyword id="KW-0472">Membrane</keyword>
<keyword id="KW-0521">NADP</keyword>
<keyword id="KW-0560">Oxidoreductase</keyword>
<keyword id="KW-1185">Reference proteome</keyword>
<keyword id="KW-0812">Transmembrane</keyword>
<keyword id="KW-1133">Transmembrane helix</keyword>
<proteinExistence type="inferred from homology"/>
<sequence length="309" mass="35430">MLDRLWEVRQALPLYLLVSTLGLAISCCFTLICPHVCRLIPALTTYGKAADQQEDNSLVEKISVPKKWFKHFYAIGLLTLFICLHTVHSLIYNPNYLHPVVLKILATLTRSYSIPPITPSTSILALLLISLHVARRLYETIFVSVYSDSRMNLFHYAVGIVHYIILPISIMCETQGVASKLPQLHVSIDDISLTQWAGAVLFWICNWKQHQLAEQIANTRKGPRGLIRNYAYGICFGGWFNLVSCPHFLFEICIYLSLFLVIPDAYVYRFIIMFVCINQTFAALITHSWYHKTFPKYPKSRKALIPYVL</sequence>
<accession>Q17428</accession>
<accession>Q7JLP4</accession>
<reference key="1">
    <citation type="journal article" date="1998" name="Science">
        <title>Genome sequence of the nematode C. elegans: a platform for investigating biology.</title>
        <authorList>
            <consortium name="The C. elegans sequencing consortium"/>
        </authorList>
    </citation>
    <scope>NUCLEOTIDE SEQUENCE [LARGE SCALE GENOMIC DNA]</scope>
    <source>
        <strain>Bristol N2</strain>
    </source>
</reference>
<organism>
    <name type="scientific">Caenorhabditis elegans</name>
    <dbReference type="NCBI Taxonomy" id="6239"/>
    <lineage>
        <taxon>Eukaryota</taxon>
        <taxon>Metazoa</taxon>
        <taxon>Ecdysozoa</taxon>
        <taxon>Nematoda</taxon>
        <taxon>Chromadorea</taxon>
        <taxon>Rhabditida</taxon>
        <taxon>Rhabditina</taxon>
        <taxon>Rhabditomorpha</taxon>
        <taxon>Rhabditoidea</taxon>
        <taxon>Rhabditidae</taxon>
        <taxon>Peloderinae</taxon>
        <taxon>Caenorhabditis</taxon>
    </lineage>
</organism>
<dbReference type="EC" id="1.3.1.94" evidence="1"/>
<dbReference type="EMBL" id="Z71178">
    <property type="protein sequence ID" value="CAA94885.2"/>
    <property type="molecule type" value="Genomic_DNA"/>
</dbReference>
<dbReference type="PIR" id="T18648">
    <property type="entry name" value="T18648"/>
</dbReference>
<dbReference type="SMR" id="Q17428"/>
<dbReference type="FunCoup" id="Q17428">
    <property type="interactions" value="1613"/>
</dbReference>
<dbReference type="STRING" id="6239.B0024.13.1"/>
<dbReference type="PaxDb" id="6239-B0024.13"/>
<dbReference type="PeptideAtlas" id="Q17428"/>
<dbReference type="EnsemblMetazoa" id="B0024.13.1">
    <property type="protein sequence ID" value="B0024.13.1"/>
    <property type="gene ID" value="WBGene00007102"/>
</dbReference>
<dbReference type="KEGG" id="cel:CELE_B0024.13"/>
<dbReference type="UCSC" id="B0024.13a">
    <property type="organism name" value="c. elegans"/>
</dbReference>
<dbReference type="AGR" id="WB:WBGene00007102"/>
<dbReference type="CTD" id="179438"/>
<dbReference type="WormBase" id="B0024.13">
    <property type="protein sequence ID" value="CE35376"/>
    <property type="gene ID" value="WBGene00007102"/>
    <property type="gene designation" value="srdf-3"/>
</dbReference>
<dbReference type="eggNOG" id="KOG1640">
    <property type="taxonomic scope" value="Eukaryota"/>
</dbReference>
<dbReference type="GeneTree" id="ENSGT00500000044920"/>
<dbReference type="HOGENOM" id="CLU_044409_2_1_1"/>
<dbReference type="InParanoid" id="Q17428"/>
<dbReference type="OMA" id="HFLFEIC"/>
<dbReference type="OrthoDB" id="5788137at2759"/>
<dbReference type="PhylomeDB" id="Q17428"/>
<dbReference type="Reactome" id="R-CEL-193048">
    <property type="pathway name" value="Androgen biosynthesis"/>
</dbReference>
<dbReference type="Reactome" id="R-CEL-446199">
    <property type="pathway name" value="Synthesis of Dolichyl-phosphate"/>
</dbReference>
<dbReference type="UniPathway" id="UPA00378"/>
<dbReference type="PRO" id="PR:Q17428"/>
<dbReference type="Proteomes" id="UP000001940">
    <property type="component" value="Chromosome V"/>
</dbReference>
<dbReference type="Bgee" id="WBGene00007102">
    <property type="expression patterns" value="Expressed in germ line (C elegans) and 4 other cell types or tissues"/>
</dbReference>
<dbReference type="GO" id="GO:0005783">
    <property type="term" value="C:endoplasmic reticulum"/>
    <property type="evidence" value="ECO:0000318"/>
    <property type="project" value="GO_Central"/>
</dbReference>
<dbReference type="GO" id="GO:0005789">
    <property type="term" value="C:endoplasmic reticulum membrane"/>
    <property type="evidence" value="ECO:0007669"/>
    <property type="project" value="UniProtKB-SubCell"/>
</dbReference>
<dbReference type="GO" id="GO:0160198">
    <property type="term" value="F:polyprenal reductase activity"/>
    <property type="evidence" value="ECO:0000250"/>
    <property type="project" value="UniProtKB"/>
</dbReference>
<dbReference type="GO" id="GO:0102389">
    <property type="term" value="F:polyprenol reductase activity"/>
    <property type="evidence" value="ECO:0000318"/>
    <property type="project" value="GO_Central"/>
</dbReference>
<dbReference type="GO" id="GO:0019408">
    <property type="term" value="P:dolichol biosynthetic process"/>
    <property type="evidence" value="ECO:0000250"/>
    <property type="project" value="UniProtKB"/>
</dbReference>
<dbReference type="GO" id="GO:0019348">
    <property type="term" value="P:dolichol metabolic process"/>
    <property type="evidence" value="ECO:0000250"/>
    <property type="project" value="UniProtKB"/>
</dbReference>
<dbReference type="GO" id="GO:0006488">
    <property type="term" value="P:dolichol-linked oligosaccharide biosynthetic process"/>
    <property type="evidence" value="ECO:0000250"/>
    <property type="project" value="UniProtKB"/>
</dbReference>
<dbReference type="GO" id="GO:0016095">
    <property type="term" value="P:polyprenol catabolic process"/>
    <property type="evidence" value="ECO:0000250"/>
    <property type="project" value="UniProtKB"/>
</dbReference>
<dbReference type="InterPro" id="IPR001104">
    <property type="entry name" value="3-oxo-5_a-steroid_4-DH_C"/>
</dbReference>
<dbReference type="InterPro" id="IPR039698">
    <property type="entry name" value="Dfg10/SRD5A3"/>
</dbReference>
<dbReference type="PANTHER" id="PTHR14624">
    <property type="entry name" value="DFG10 PROTEIN"/>
    <property type="match status" value="1"/>
</dbReference>
<dbReference type="PANTHER" id="PTHR14624:SF0">
    <property type="entry name" value="POLYPRENOL REDUCTASE"/>
    <property type="match status" value="1"/>
</dbReference>
<dbReference type="Pfam" id="PF02544">
    <property type="entry name" value="Steroid_dh"/>
    <property type="match status" value="1"/>
</dbReference>
<dbReference type="PROSITE" id="PS50244">
    <property type="entry name" value="S5A_REDUCTASE"/>
    <property type="match status" value="1"/>
</dbReference>